<evidence type="ECO:0000255" key="1"/>
<evidence type="ECO:0000255" key="2">
    <source>
        <dbReference type="PROSITE-ProRule" id="PRU00274"/>
    </source>
</evidence>
<evidence type="ECO:0000269" key="3">
    <source>
    </source>
</evidence>
<evidence type="ECO:0000269" key="4">
    <source>
    </source>
</evidence>
<evidence type="ECO:0000269" key="5">
    <source>
    </source>
</evidence>
<evidence type="ECO:0000305" key="6"/>
<evidence type="ECO:0007829" key="7">
    <source>
        <dbReference type="PDB" id="1EUF"/>
    </source>
</evidence>
<dbReference type="EC" id="3.4.21.-"/>
<dbReference type="EMBL" id="AF198965">
    <property type="protein sequence ID" value="AAG28537.1"/>
    <property type="molecule type" value="mRNA"/>
</dbReference>
<dbReference type="PIR" id="S69370">
    <property type="entry name" value="S69370"/>
</dbReference>
<dbReference type="PIR" id="S69371">
    <property type="entry name" value="S69371"/>
</dbReference>
<dbReference type="RefSeq" id="NP_776721.1">
    <property type="nucleotide sequence ID" value="NM_174296.2"/>
</dbReference>
<dbReference type="PDB" id="1EUF">
    <property type="method" value="X-ray"/>
    <property type="resolution" value="2.40 A"/>
    <property type="chains" value="A=20-246"/>
</dbReference>
<dbReference type="PDBsum" id="1EUF"/>
<dbReference type="SMR" id="P80219"/>
<dbReference type="FunCoup" id="P80219">
    <property type="interactions" value="203"/>
</dbReference>
<dbReference type="STRING" id="9913.ENSBTAP00000073834"/>
<dbReference type="MEROPS" id="S01.142"/>
<dbReference type="GlyCosmos" id="P80219">
    <property type="glycosylation" value="1 site, No reported glycans"/>
</dbReference>
<dbReference type="GlyGen" id="P80219">
    <property type="glycosylation" value="1 site"/>
</dbReference>
<dbReference type="PaxDb" id="9913-ENSBTAP00000050126"/>
<dbReference type="PeptideAtlas" id="P80219"/>
<dbReference type="GeneID" id="281731"/>
<dbReference type="KEGG" id="bta:281731"/>
<dbReference type="CTD" id="3002"/>
<dbReference type="eggNOG" id="KOG3627">
    <property type="taxonomic scope" value="Eukaryota"/>
</dbReference>
<dbReference type="InParanoid" id="P80219"/>
<dbReference type="OrthoDB" id="5565075at2759"/>
<dbReference type="BRENDA" id="3.4.21.B3">
    <property type="organism ID" value="908"/>
</dbReference>
<dbReference type="SABIO-RK" id="P80219"/>
<dbReference type="EvolutionaryTrace" id="P80219"/>
<dbReference type="Proteomes" id="UP000009136">
    <property type="component" value="Unplaced"/>
</dbReference>
<dbReference type="GO" id="GO:0005615">
    <property type="term" value="C:extracellular space"/>
    <property type="evidence" value="ECO:0000318"/>
    <property type="project" value="GO_Central"/>
</dbReference>
<dbReference type="GO" id="GO:0004252">
    <property type="term" value="F:serine-type endopeptidase activity"/>
    <property type="evidence" value="ECO:0000318"/>
    <property type="project" value="GO_Central"/>
</dbReference>
<dbReference type="GO" id="GO:0140507">
    <property type="term" value="P:granzyme-mediated programmed cell death signaling pathway"/>
    <property type="evidence" value="ECO:0000318"/>
    <property type="project" value="GO_Central"/>
</dbReference>
<dbReference type="GO" id="GO:0051604">
    <property type="term" value="P:protein maturation"/>
    <property type="evidence" value="ECO:0000318"/>
    <property type="project" value="GO_Central"/>
</dbReference>
<dbReference type="GO" id="GO:0006508">
    <property type="term" value="P:proteolysis"/>
    <property type="evidence" value="ECO:0007669"/>
    <property type="project" value="UniProtKB-KW"/>
</dbReference>
<dbReference type="CDD" id="cd00190">
    <property type="entry name" value="Tryp_SPc"/>
    <property type="match status" value="1"/>
</dbReference>
<dbReference type="FunFam" id="2.40.10.10:FF:000014">
    <property type="entry name" value="Complement factor D"/>
    <property type="match status" value="1"/>
</dbReference>
<dbReference type="Gene3D" id="2.40.10.10">
    <property type="entry name" value="Trypsin-like serine proteases"/>
    <property type="match status" value="2"/>
</dbReference>
<dbReference type="InterPro" id="IPR009003">
    <property type="entry name" value="Peptidase_S1_PA"/>
</dbReference>
<dbReference type="InterPro" id="IPR043504">
    <property type="entry name" value="Peptidase_S1_PA_chymotrypsin"/>
</dbReference>
<dbReference type="InterPro" id="IPR001314">
    <property type="entry name" value="Peptidase_S1A"/>
</dbReference>
<dbReference type="InterPro" id="IPR001254">
    <property type="entry name" value="Trypsin_dom"/>
</dbReference>
<dbReference type="InterPro" id="IPR018114">
    <property type="entry name" value="TRYPSIN_HIS"/>
</dbReference>
<dbReference type="InterPro" id="IPR033116">
    <property type="entry name" value="TRYPSIN_SER"/>
</dbReference>
<dbReference type="PANTHER" id="PTHR24271:SF58">
    <property type="entry name" value="DUODENASE-1"/>
    <property type="match status" value="1"/>
</dbReference>
<dbReference type="PANTHER" id="PTHR24271">
    <property type="entry name" value="KALLIKREIN-RELATED"/>
    <property type="match status" value="1"/>
</dbReference>
<dbReference type="Pfam" id="PF00089">
    <property type="entry name" value="Trypsin"/>
    <property type="match status" value="1"/>
</dbReference>
<dbReference type="PRINTS" id="PR00722">
    <property type="entry name" value="CHYMOTRYPSIN"/>
</dbReference>
<dbReference type="SMART" id="SM00020">
    <property type="entry name" value="Tryp_SPc"/>
    <property type="match status" value="1"/>
</dbReference>
<dbReference type="SUPFAM" id="SSF50494">
    <property type="entry name" value="Trypsin-like serine proteases"/>
    <property type="match status" value="1"/>
</dbReference>
<dbReference type="PROSITE" id="PS50240">
    <property type="entry name" value="TRYPSIN_DOM"/>
    <property type="match status" value="1"/>
</dbReference>
<dbReference type="PROSITE" id="PS00134">
    <property type="entry name" value="TRYPSIN_HIS"/>
    <property type="match status" value="1"/>
</dbReference>
<dbReference type="PROSITE" id="PS00135">
    <property type="entry name" value="TRYPSIN_SER"/>
    <property type="match status" value="1"/>
</dbReference>
<accession>P80219</accession>
<accession>Q9GLN2</accession>
<organism>
    <name type="scientific">Bos taurus</name>
    <name type="common">Bovine</name>
    <dbReference type="NCBI Taxonomy" id="9913"/>
    <lineage>
        <taxon>Eukaryota</taxon>
        <taxon>Metazoa</taxon>
        <taxon>Chordata</taxon>
        <taxon>Craniata</taxon>
        <taxon>Vertebrata</taxon>
        <taxon>Euteleostomi</taxon>
        <taxon>Mammalia</taxon>
        <taxon>Eutheria</taxon>
        <taxon>Laurasiatheria</taxon>
        <taxon>Artiodactyla</taxon>
        <taxon>Ruminantia</taxon>
        <taxon>Pecora</taxon>
        <taxon>Bovidae</taxon>
        <taxon>Bovinae</taxon>
        <taxon>Bos</taxon>
    </lineage>
</organism>
<name>DDN1_BOVIN</name>
<proteinExistence type="evidence at protein level"/>
<feature type="signal peptide" evidence="1">
    <location>
        <begin position="1"/>
        <end position="17"/>
    </location>
</feature>
<feature type="propeptide" id="PRO_0000244396" evidence="3 4 5">
    <location>
        <begin position="18"/>
        <end position="19"/>
    </location>
</feature>
<feature type="chain" id="PRO_0000088659" description="Duodenase-1">
    <location>
        <begin position="20"/>
        <end position="251"/>
    </location>
</feature>
<feature type="domain" description="Peptidase S1" evidence="2">
    <location>
        <begin position="20"/>
        <end position="242"/>
    </location>
</feature>
<feature type="active site" description="Charge relay system">
    <location>
        <position position="63"/>
    </location>
</feature>
<feature type="active site" description="Charge relay system">
    <location>
        <position position="107"/>
    </location>
</feature>
<feature type="active site" description="Charge relay system">
    <location>
        <position position="201"/>
    </location>
</feature>
<feature type="glycosylation site" description="N-linked (GlcNAc...) asparagine">
    <location>
        <position position="70"/>
    </location>
</feature>
<feature type="disulfide bond">
    <location>
        <begin position="48"/>
        <end position="64"/>
    </location>
</feature>
<feature type="disulfide bond">
    <location>
        <begin position="141"/>
        <end position="207"/>
    </location>
</feature>
<feature type="disulfide bond">
    <location>
        <begin position="172"/>
        <end position="186"/>
    </location>
</feature>
<feature type="sequence conflict" description="In Ref. 2; AA sequence." evidence="6" ref="2">
    <location>
        <position position="68"/>
    </location>
</feature>
<feature type="sequence conflict" description="In Ref. 2; AA sequence." evidence="6" ref="2">
    <original>N</original>
    <variation>K</variation>
    <location>
        <position position="158"/>
    </location>
</feature>
<feature type="sequence conflict" description="In Ref. 2; AA sequence and 3; AA sequence." evidence="6" ref="2 3">
    <original>K</original>
    <variation>R</variation>
    <location>
        <position position="194"/>
    </location>
</feature>
<feature type="sequence conflict" description="In Ref. 2; AA sequence." evidence="6" ref="2">
    <original>R</original>
    <variation>K</variation>
    <location>
        <position position="219"/>
    </location>
</feature>
<feature type="sequence conflict" description="In Ref. 2; AA sequence." evidence="6" ref="2">
    <original>S</original>
    <variation>P</variation>
    <location>
        <position position="236"/>
    </location>
</feature>
<feature type="sequence conflict" description="In Ref. 2; AA sequence." evidence="6" ref="2">
    <original>HSTMRRY</original>
    <variation>KRVMYLF</variation>
    <location>
        <begin position="239"/>
        <end position="245"/>
    </location>
</feature>
<feature type="strand" evidence="7">
    <location>
        <begin position="34"/>
        <end position="54"/>
    </location>
</feature>
<feature type="strand" evidence="7">
    <location>
        <begin position="57"/>
        <end position="60"/>
    </location>
</feature>
<feature type="helix" evidence="7">
    <location>
        <begin position="62"/>
        <end position="64"/>
    </location>
</feature>
<feature type="strand" evidence="7">
    <location>
        <begin position="69"/>
        <end position="74"/>
    </location>
</feature>
<feature type="strand" evidence="7">
    <location>
        <begin position="86"/>
        <end position="95"/>
    </location>
</feature>
<feature type="turn" evidence="7">
    <location>
        <begin position="101"/>
        <end position="103"/>
    </location>
</feature>
<feature type="strand" evidence="7">
    <location>
        <begin position="109"/>
        <end position="115"/>
    </location>
</feature>
<feature type="strand" evidence="7">
    <location>
        <begin position="140"/>
        <end position="146"/>
    </location>
</feature>
<feature type="strand" evidence="7">
    <location>
        <begin position="148"/>
        <end position="150"/>
    </location>
</feature>
<feature type="strand" evidence="7">
    <location>
        <begin position="160"/>
        <end position="167"/>
    </location>
</feature>
<feature type="helix" evidence="7">
    <location>
        <begin position="170"/>
        <end position="173"/>
    </location>
</feature>
<feature type="turn" evidence="7">
    <location>
        <begin position="181"/>
        <end position="183"/>
    </location>
</feature>
<feature type="strand" evidence="7">
    <location>
        <begin position="184"/>
        <end position="188"/>
    </location>
</feature>
<feature type="strand" evidence="7">
    <location>
        <begin position="204"/>
        <end position="207"/>
    </location>
</feature>
<feature type="strand" evidence="7">
    <location>
        <begin position="210"/>
        <end position="217"/>
    </location>
</feature>
<feature type="strand" evidence="7">
    <location>
        <begin position="226"/>
        <end position="230"/>
    </location>
</feature>
<feature type="helix" evidence="7">
    <location>
        <begin position="231"/>
        <end position="233"/>
    </location>
</feature>
<feature type="helix" evidence="7">
    <location>
        <begin position="235"/>
        <end position="241"/>
    </location>
</feature>
<reference key="1">
    <citation type="submission" date="1999-10" db="EMBL/GenBank/DDBJ databases">
        <title>cDNA cloning of duodenase, a serine protease from bovine duodenal mucosa.</title>
        <authorList>
            <person name="Smirnova E.V."/>
            <person name="Evtodienko A.Y."/>
            <person name="Zamolodchikova T.S."/>
        </authorList>
    </citation>
    <scope>NUCLEOTIDE SEQUENCE [MRNA]</scope>
</reference>
<reference key="2">
    <citation type="journal article" date="1995" name="Eur. J. Biochem.">
        <title>Duodenase, a new serine protease of unusual specificity from bovine duodenal mucosa. Primary structure of the enzyme.</title>
        <authorList>
            <person name="Zamolodchikova T.S."/>
            <person name="Vorotyntseva T.I."/>
            <person name="Nazimov I.V."/>
            <person name="Grishina G.A."/>
        </authorList>
    </citation>
    <scope>PROTEIN SEQUENCE OF 20-246</scope>
    <source>
        <tissue>Duodenum</tissue>
    </source>
</reference>
<reference key="3">
    <citation type="journal article" date="1992" name="Dokl. Akad. Nauk SSSR">
        <title>Duodenase -- a new serine proteinase with unusual specificity.</title>
        <authorList>
            <person name="Antonov V.K."/>
            <person name="Vorotyntseva T.I."/>
            <person name="Zamolodchikova T.S."/>
        </authorList>
    </citation>
    <scope>PROTEIN SEQUENCE OF 20-43 AND 192-203</scope>
</reference>
<reference key="4">
    <citation type="journal article" date="1995" name="Eur. J. Biochem.">
        <title>Duodenase, a new serine protease of unusual specificity from bovine duodenal mucosa. Purification and properties.</title>
        <authorList>
            <person name="Zamolodchikova T.S."/>
            <person name="Vorotyntseva T.I."/>
            <person name="Antonov V.K."/>
        </authorList>
    </citation>
    <scope>PROTEIN SEQUENCE OF 20-43</scope>
    <scope>FUNCTION</scope>
    <source>
        <tissue>Duodenum</tissue>
    </source>
</reference>
<reference key="5">
    <citation type="journal article" date="2000" name="Proteins">
        <title>Crystal structure of bovine duodenase, a serine protease, with dual trypsin and chymotrypsin-like specificities.</title>
        <authorList>
            <person name="Pletnev V.Z."/>
            <person name="Zamolodchikova T.S."/>
            <person name="Pangborn W.A."/>
            <person name="Duax W.L."/>
        </authorList>
    </citation>
    <scope>X-RAY CRYSTALLOGRAPHY (2.4 ANGSTROMS) OF 20-246</scope>
</reference>
<keyword id="KW-0002">3D-structure</keyword>
<keyword id="KW-0903">Direct protein sequencing</keyword>
<keyword id="KW-1015">Disulfide bond</keyword>
<keyword id="KW-0325">Glycoprotein</keyword>
<keyword id="KW-0378">Hydrolase</keyword>
<keyword id="KW-0645">Protease</keyword>
<keyword id="KW-1185">Reference proteome</keyword>
<keyword id="KW-0720">Serine protease</keyword>
<keyword id="KW-0732">Signal</keyword>
<keyword id="KW-0865">Zymogen</keyword>
<comment type="function">
    <text evidence="4">Protease which has both trypsin-like and chymotrypsin-like activities. Shows a preferential cleavage after Lys, Arg, Tyr, Phe, and Leu residues.</text>
</comment>
<comment type="biophysicochemical properties">
    <phDependence>
        <text>Optimum pH is 8.0.</text>
    </phDependence>
    <temperatureDependence>
        <text>Optimum temperature is 50 degrees Celsius.</text>
    </temperatureDependence>
</comment>
<comment type="subunit">
    <text>Monomer.</text>
</comment>
<comment type="similarity">
    <text evidence="2">Belongs to the peptidase S1 family.</text>
</comment>
<protein>
    <recommendedName>
        <fullName>Duodenase-1</fullName>
        <ecNumber>3.4.21.-</ecNumber>
    </recommendedName>
    <alternativeName>
        <fullName>Duodenase I</fullName>
    </alternativeName>
    <alternativeName>
        <fullName>Duodenum serine protease</fullName>
    </alternativeName>
</protein>
<gene>
    <name type="primary">BDMD1</name>
</gene>
<sequence length="251" mass="27556">MVLLLLLVALLSPTGEAGKIIGGHEAKPHSRPYMAFLLFKTSGKSHICGGFLVREDFVLTAAHCLGSSINVTLGAHNIMERERTQQVIPVRRPIPHPDYNDETLANDIMLLKLTRKADITDKVSPINLPRSLAEVKPGMMCSVAGWGRLGVNMPSTDNLQEVDLEVQSEEKCIARFKNYIPFTQICAGDPSKRKNSFSGDSGGPLVCNGVAQGIVSYGRNDGTTPDVYTRISSFLSWIHSTMRRYKRQGSV</sequence>